<protein>
    <recommendedName>
        <fullName evidence="1">NADH-ubiquinone oxidoreductase chain 3</fullName>
        <ecNumber evidence="1">7.1.1.2</ecNumber>
    </recommendedName>
    <alternativeName>
        <fullName>NADH dehydrogenase subunit 3</fullName>
    </alternativeName>
</protein>
<name>NU3M_PODFL</name>
<accession>O21616</accession>
<sequence>MNMLMILSVNIILSTCLIMIAFWLPQLNVYTEKANPYECGFDPMSSARLPFSMKFFLVAITFLLFDLEIALLLPLPWAIQMHNINMMMSTAFILVSILALGLAYEWLQKGLEWTE</sequence>
<keyword id="KW-0249">Electron transport</keyword>
<keyword id="KW-0472">Membrane</keyword>
<keyword id="KW-0496">Mitochondrion</keyword>
<keyword id="KW-0999">Mitochondrion inner membrane</keyword>
<keyword id="KW-0520">NAD</keyword>
<keyword id="KW-0679">Respiratory chain</keyword>
<keyword id="KW-1278">Translocase</keyword>
<keyword id="KW-0812">Transmembrane</keyword>
<keyword id="KW-1133">Transmembrane helix</keyword>
<keyword id="KW-0813">Transport</keyword>
<keyword id="KW-0830">Ubiquinone</keyword>
<geneLocation type="mitochondrion"/>
<feature type="chain" id="PRO_0000117810" description="NADH-ubiquinone oxidoreductase chain 3">
    <location>
        <begin position="1"/>
        <end position="115"/>
    </location>
</feature>
<feature type="transmembrane region" description="Helical" evidence="3">
    <location>
        <begin position="4"/>
        <end position="24"/>
    </location>
</feature>
<feature type="transmembrane region" description="Helical" evidence="3">
    <location>
        <begin position="55"/>
        <end position="75"/>
    </location>
</feature>
<feature type="transmembrane region" description="Helical" evidence="3">
    <location>
        <begin position="84"/>
        <end position="104"/>
    </location>
</feature>
<reference key="1">
    <citation type="journal article" date="1998" name="Mol. Biol. Evol.">
        <title>Molecular systematics and paleobiogeography of the South American sigmodontine rodents.</title>
        <authorList>
            <person name="Engel S.R."/>
            <person name="Hogan K.M."/>
            <person name="Taylor J.F."/>
            <person name="Davis S.K."/>
        </authorList>
    </citation>
    <scope>NUCLEOTIDE SEQUENCE [GENOMIC DNA]</scope>
</reference>
<comment type="function">
    <text evidence="1">Core subunit of the mitochondrial membrane respiratory chain NADH dehydrogenase (Complex I) which catalyzes electron transfer from NADH through the respiratory chain, using ubiquinone as an electron acceptor. Essential for the catalytic activity of complex I.</text>
</comment>
<comment type="catalytic activity">
    <reaction evidence="1">
        <text>a ubiquinone + NADH + 5 H(+)(in) = a ubiquinol + NAD(+) + 4 H(+)(out)</text>
        <dbReference type="Rhea" id="RHEA:29091"/>
        <dbReference type="Rhea" id="RHEA-COMP:9565"/>
        <dbReference type="Rhea" id="RHEA-COMP:9566"/>
        <dbReference type="ChEBI" id="CHEBI:15378"/>
        <dbReference type="ChEBI" id="CHEBI:16389"/>
        <dbReference type="ChEBI" id="CHEBI:17976"/>
        <dbReference type="ChEBI" id="CHEBI:57540"/>
        <dbReference type="ChEBI" id="CHEBI:57945"/>
        <dbReference type="EC" id="7.1.1.2"/>
    </reaction>
</comment>
<comment type="subunit">
    <text evidence="1">Core subunit of respiratory chain NADH dehydrogenase (Complex I) which is composed of 45 different subunits. Interacts with TMEM186. Interacts with TMEM242 (By similarity).</text>
</comment>
<comment type="subcellular location">
    <subcellularLocation>
        <location evidence="2">Mitochondrion inner membrane</location>
        <topology evidence="3">Multi-pass membrane protein</topology>
    </subcellularLocation>
</comment>
<comment type="similarity">
    <text evidence="4">Belongs to the complex I subunit 3 family.</text>
</comment>
<evidence type="ECO:0000250" key="1">
    <source>
        <dbReference type="UniProtKB" id="P03897"/>
    </source>
</evidence>
<evidence type="ECO:0000250" key="2">
    <source>
        <dbReference type="UniProtKB" id="P03898"/>
    </source>
</evidence>
<evidence type="ECO:0000255" key="3"/>
<evidence type="ECO:0000305" key="4"/>
<proteinExistence type="inferred from homology"/>
<organism>
    <name type="scientific">Podomys floridanus</name>
    <name type="common">Florida mouse</name>
    <name type="synonym">Hesperomys floridanus</name>
    <dbReference type="NCBI Taxonomy" id="56323"/>
    <lineage>
        <taxon>Eukaryota</taxon>
        <taxon>Metazoa</taxon>
        <taxon>Chordata</taxon>
        <taxon>Craniata</taxon>
        <taxon>Vertebrata</taxon>
        <taxon>Euteleostomi</taxon>
        <taxon>Mammalia</taxon>
        <taxon>Eutheria</taxon>
        <taxon>Euarchontoglires</taxon>
        <taxon>Glires</taxon>
        <taxon>Rodentia</taxon>
        <taxon>Myomorpha</taxon>
        <taxon>Muroidea</taxon>
        <taxon>Cricetidae</taxon>
        <taxon>Neotominae</taxon>
        <taxon>Podomys</taxon>
    </lineage>
</organism>
<dbReference type="EC" id="7.1.1.2" evidence="1"/>
<dbReference type="EMBL" id="U83865">
    <property type="protein sequence ID" value="AAB87265.1"/>
    <property type="molecule type" value="Genomic_DNA"/>
</dbReference>
<dbReference type="SMR" id="O21616"/>
<dbReference type="GO" id="GO:0005743">
    <property type="term" value="C:mitochondrial inner membrane"/>
    <property type="evidence" value="ECO:0000250"/>
    <property type="project" value="UniProtKB"/>
</dbReference>
<dbReference type="GO" id="GO:0030964">
    <property type="term" value="C:NADH dehydrogenase complex"/>
    <property type="evidence" value="ECO:0007669"/>
    <property type="project" value="TreeGrafter"/>
</dbReference>
<dbReference type="GO" id="GO:0008137">
    <property type="term" value="F:NADH dehydrogenase (ubiquinone) activity"/>
    <property type="evidence" value="ECO:0000250"/>
    <property type="project" value="UniProtKB"/>
</dbReference>
<dbReference type="GO" id="GO:0006120">
    <property type="term" value="P:mitochondrial electron transport, NADH to ubiquinone"/>
    <property type="evidence" value="ECO:0000250"/>
    <property type="project" value="UniProtKB"/>
</dbReference>
<dbReference type="FunFam" id="1.20.58.1610:FF:000004">
    <property type="entry name" value="NADH-quinone oxidoreductase subunit A"/>
    <property type="match status" value="1"/>
</dbReference>
<dbReference type="Gene3D" id="1.20.58.1610">
    <property type="entry name" value="NADH:ubiquinone/plastoquinone oxidoreductase, chain 3"/>
    <property type="match status" value="1"/>
</dbReference>
<dbReference type="InterPro" id="IPR000440">
    <property type="entry name" value="NADH_UbQ/plastoQ_OxRdtase_su3"/>
</dbReference>
<dbReference type="InterPro" id="IPR038430">
    <property type="entry name" value="NDAH_ubi_oxred_su3_sf"/>
</dbReference>
<dbReference type="PANTHER" id="PTHR11058">
    <property type="entry name" value="NADH-UBIQUINONE OXIDOREDUCTASE CHAIN 3"/>
    <property type="match status" value="1"/>
</dbReference>
<dbReference type="PANTHER" id="PTHR11058:SF9">
    <property type="entry name" value="NADH-UBIQUINONE OXIDOREDUCTASE CHAIN 3"/>
    <property type="match status" value="1"/>
</dbReference>
<dbReference type="Pfam" id="PF00507">
    <property type="entry name" value="Oxidored_q4"/>
    <property type="match status" value="1"/>
</dbReference>
<gene>
    <name evidence="1" type="primary">MT-ND3</name>
    <name type="synonym">MTND3</name>
    <name type="synonym">NADH3</name>
    <name type="synonym">ND3</name>
</gene>